<accession>Q88XZ0</accession>
<accession>F9UMK1</accession>
<name>RS12_LACPL</name>
<protein>
    <recommendedName>
        <fullName evidence="1">Small ribosomal subunit protein uS12</fullName>
    </recommendedName>
    <alternativeName>
        <fullName evidence="2">30S ribosomal protein S12</fullName>
    </alternativeName>
</protein>
<evidence type="ECO:0000255" key="1">
    <source>
        <dbReference type="HAMAP-Rule" id="MF_00403"/>
    </source>
</evidence>
<evidence type="ECO:0000305" key="2"/>
<comment type="function">
    <text evidence="1">With S4 and S5 plays an important role in translational accuracy.</text>
</comment>
<comment type="function">
    <text evidence="1">Interacts with and stabilizes bases of the 16S rRNA that are involved in tRNA selection in the A site and with the mRNA backbone. Located at the interface of the 30S and 50S subunits, it traverses the body of the 30S subunit contacting proteins on the other side and probably holding the rRNA structure together. The combined cluster of proteins S8, S12 and S17 appears to hold together the shoulder and platform of the 30S subunit.</text>
</comment>
<comment type="subunit">
    <text evidence="1">Part of the 30S ribosomal subunit. Contacts proteins S8 and S17. May interact with IF1 in the 30S initiation complex.</text>
</comment>
<comment type="similarity">
    <text evidence="1">Belongs to the universal ribosomal protein uS12 family.</text>
</comment>
<comment type="caution">
    <text evidence="2">Because the enzyme that would modify Asp-102 to 3-methylthioaspartic acid has not been found in the proteome of this organism, that modification is not predicted.</text>
</comment>
<gene>
    <name evidence="1" type="primary">rpsL</name>
    <name type="ordered locus">lp_1025</name>
</gene>
<reference key="1">
    <citation type="journal article" date="2003" name="Proc. Natl. Acad. Sci. U.S.A.">
        <title>Complete genome sequence of Lactobacillus plantarum WCFS1.</title>
        <authorList>
            <person name="Kleerebezem M."/>
            <person name="Boekhorst J."/>
            <person name="van Kranenburg R."/>
            <person name="Molenaar D."/>
            <person name="Kuipers O.P."/>
            <person name="Leer R."/>
            <person name="Tarchini R."/>
            <person name="Peters S.A."/>
            <person name="Sandbrink H.M."/>
            <person name="Fiers M.W.E.J."/>
            <person name="Stiekema W."/>
            <person name="Klein Lankhorst R.M."/>
            <person name="Bron P.A."/>
            <person name="Hoffer S.M."/>
            <person name="Nierop Groot M.N."/>
            <person name="Kerkhoven R."/>
            <person name="De Vries M."/>
            <person name="Ursing B."/>
            <person name="De Vos W.M."/>
            <person name="Siezen R.J."/>
        </authorList>
    </citation>
    <scope>NUCLEOTIDE SEQUENCE [LARGE SCALE GENOMIC DNA]</scope>
    <source>
        <strain>ATCC BAA-793 / NCIMB 8826 / WCFS1</strain>
    </source>
</reference>
<reference key="2">
    <citation type="journal article" date="2012" name="J. Bacteriol.">
        <title>Complete resequencing and reannotation of the Lactobacillus plantarum WCFS1 genome.</title>
        <authorList>
            <person name="Siezen R.J."/>
            <person name="Francke C."/>
            <person name="Renckens B."/>
            <person name="Boekhorst J."/>
            <person name="Wels M."/>
            <person name="Kleerebezem M."/>
            <person name="van Hijum S.A."/>
        </authorList>
    </citation>
    <scope>NUCLEOTIDE SEQUENCE [LARGE SCALE GENOMIC DNA]</scope>
    <scope>GENOME REANNOTATION</scope>
    <source>
        <strain>ATCC BAA-793 / NCIMB 8826 / WCFS1</strain>
    </source>
</reference>
<sequence length="137" mass="15190">MPTINQLIRKGRKSKVSKSNAPALNFGYNSYKKVATNNPAPQKRGVATRVGTMTPKKPNSALRKYARVRLSNLIEVTAYIPGIGHNLQEHSVVLIRGGRVKDLPGVRYHVIRGALDTAGVEDRRQSRSKYGTKKPKK</sequence>
<keyword id="KW-1185">Reference proteome</keyword>
<keyword id="KW-0687">Ribonucleoprotein</keyword>
<keyword id="KW-0689">Ribosomal protein</keyword>
<keyword id="KW-0694">RNA-binding</keyword>
<keyword id="KW-0699">rRNA-binding</keyword>
<keyword id="KW-0820">tRNA-binding</keyword>
<feature type="chain" id="PRO_0000146240" description="Small ribosomal subunit protein uS12">
    <location>
        <begin position="1"/>
        <end position="137"/>
    </location>
</feature>
<proteinExistence type="inferred from homology"/>
<dbReference type="EMBL" id="AL935263">
    <property type="protein sequence ID" value="CCC78440.1"/>
    <property type="molecule type" value="Genomic_DNA"/>
</dbReference>
<dbReference type="RefSeq" id="WP_003641249.1">
    <property type="nucleotide sequence ID" value="NC_004567.2"/>
</dbReference>
<dbReference type="RefSeq" id="YP_004888954.1">
    <property type="nucleotide sequence ID" value="NC_004567.2"/>
</dbReference>
<dbReference type="SMR" id="Q88XZ0"/>
<dbReference type="STRING" id="220668.lp_1025"/>
<dbReference type="EnsemblBacteria" id="CCC78440">
    <property type="protein sequence ID" value="CCC78440"/>
    <property type="gene ID" value="lp_1025"/>
</dbReference>
<dbReference type="GeneID" id="89668542"/>
<dbReference type="KEGG" id="lpl:lp_1025"/>
<dbReference type="PATRIC" id="fig|220668.9.peg.866"/>
<dbReference type="eggNOG" id="COG0048">
    <property type="taxonomic scope" value="Bacteria"/>
</dbReference>
<dbReference type="HOGENOM" id="CLU_104295_1_2_9"/>
<dbReference type="OrthoDB" id="9802366at2"/>
<dbReference type="PhylomeDB" id="Q88XZ0"/>
<dbReference type="Proteomes" id="UP000000432">
    <property type="component" value="Chromosome"/>
</dbReference>
<dbReference type="GO" id="GO:0015935">
    <property type="term" value="C:small ribosomal subunit"/>
    <property type="evidence" value="ECO:0007669"/>
    <property type="project" value="InterPro"/>
</dbReference>
<dbReference type="GO" id="GO:0019843">
    <property type="term" value="F:rRNA binding"/>
    <property type="evidence" value="ECO:0007669"/>
    <property type="project" value="UniProtKB-UniRule"/>
</dbReference>
<dbReference type="GO" id="GO:0003735">
    <property type="term" value="F:structural constituent of ribosome"/>
    <property type="evidence" value="ECO:0007669"/>
    <property type="project" value="InterPro"/>
</dbReference>
<dbReference type="GO" id="GO:0000049">
    <property type="term" value="F:tRNA binding"/>
    <property type="evidence" value="ECO:0007669"/>
    <property type="project" value="UniProtKB-UniRule"/>
</dbReference>
<dbReference type="GO" id="GO:0006412">
    <property type="term" value="P:translation"/>
    <property type="evidence" value="ECO:0007669"/>
    <property type="project" value="UniProtKB-UniRule"/>
</dbReference>
<dbReference type="CDD" id="cd03368">
    <property type="entry name" value="Ribosomal_S12"/>
    <property type="match status" value="1"/>
</dbReference>
<dbReference type="FunFam" id="2.40.50.140:FF:000001">
    <property type="entry name" value="30S ribosomal protein S12"/>
    <property type="match status" value="1"/>
</dbReference>
<dbReference type="Gene3D" id="2.40.50.140">
    <property type="entry name" value="Nucleic acid-binding proteins"/>
    <property type="match status" value="1"/>
</dbReference>
<dbReference type="HAMAP" id="MF_00403_B">
    <property type="entry name" value="Ribosomal_uS12_B"/>
    <property type="match status" value="1"/>
</dbReference>
<dbReference type="InterPro" id="IPR012340">
    <property type="entry name" value="NA-bd_OB-fold"/>
</dbReference>
<dbReference type="InterPro" id="IPR006032">
    <property type="entry name" value="Ribosomal_uS12"/>
</dbReference>
<dbReference type="InterPro" id="IPR005679">
    <property type="entry name" value="Ribosomal_uS12_bac"/>
</dbReference>
<dbReference type="NCBIfam" id="TIGR00981">
    <property type="entry name" value="rpsL_bact"/>
    <property type="match status" value="1"/>
</dbReference>
<dbReference type="PANTHER" id="PTHR11652">
    <property type="entry name" value="30S RIBOSOMAL PROTEIN S12 FAMILY MEMBER"/>
    <property type="match status" value="1"/>
</dbReference>
<dbReference type="Pfam" id="PF00164">
    <property type="entry name" value="Ribosom_S12_S23"/>
    <property type="match status" value="1"/>
</dbReference>
<dbReference type="PIRSF" id="PIRSF002133">
    <property type="entry name" value="Ribosomal_S12/S23"/>
    <property type="match status" value="1"/>
</dbReference>
<dbReference type="PRINTS" id="PR01034">
    <property type="entry name" value="RIBOSOMALS12"/>
</dbReference>
<dbReference type="SUPFAM" id="SSF50249">
    <property type="entry name" value="Nucleic acid-binding proteins"/>
    <property type="match status" value="1"/>
</dbReference>
<dbReference type="PROSITE" id="PS00055">
    <property type="entry name" value="RIBOSOMAL_S12"/>
    <property type="match status" value="1"/>
</dbReference>
<organism>
    <name type="scientific">Lactiplantibacillus plantarum (strain ATCC BAA-793 / NCIMB 8826 / WCFS1)</name>
    <name type="common">Lactobacillus plantarum</name>
    <dbReference type="NCBI Taxonomy" id="220668"/>
    <lineage>
        <taxon>Bacteria</taxon>
        <taxon>Bacillati</taxon>
        <taxon>Bacillota</taxon>
        <taxon>Bacilli</taxon>
        <taxon>Lactobacillales</taxon>
        <taxon>Lactobacillaceae</taxon>
        <taxon>Lactiplantibacillus</taxon>
    </lineage>
</organism>